<accession>Q92AN9</accession>
<name>PURL_LISIN</name>
<dbReference type="EC" id="6.3.5.3" evidence="1"/>
<dbReference type="EMBL" id="AL596170">
    <property type="protein sequence ID" value="CAC97111.1"/>
    <property type="molecule type" value="Genomic_DNA"/>
</dbReference>
<dbReference type="PIR" id="AG1667">
    <property type="entry name" value="AG1667"/>
</dbReference>
<dbReference type="RefSeq" id="WP_010991002.1">
    <property type="nucleotide sequence ID" value="NC_003212.1"/>
</dbReference>
<dbReference type="SMR" id="Q92AN9"/>
<dbReference type="STRING" id="272626.gene:17566236"/>
<dbReference type="KEGG" id="lin:purQ"/>
<dbReference type="eggNOG" id="COG0046">
    <property type="taxonomic scope" value="Bacteria"/>
</dbReference>
<dbReference type="HOGENOM" id="CLU_003100_0_1_9"/>
<dbReference type="OrthoDB" id="9804441at2"/>
<dbReference type="UniPathway" id="UPA00074">
    <property type="reaction ID" value="UER00128"/>
</dbReference>
<dbReference type="Proteomes" id="UP000002513">
    <property type="component" value="Chromosome"/>
</dbReference>
<dbReference type="GO" id="GO:0005737">
    <property type="term" value="C:cytoplasm"/>
    <property type="evidence" value="ECO:0007669"/>
    <property type="project" value="UniProtKB-SubCell"/>
</dbReference>
<dbReference type="GO" id="GO:0005524">
    <property type="term" value="F:ATP binding"/>
    <property type="evidence" value="ECO:0007669"/>
    <property type="project" value="UniProtKB-UniRule"/>
</dbReference>
<dbReference type="GO" id="GO:0000287">
    <property type="term" value="F:magnesium ion binding"/>
    <property type="evidence" value="ECO:0007669"/>
    <property type="project" value="UniProtKB-UniRule"/>
</dbReference>
<dbReference type="GO" id="GO:0004642">
    <property type="term" value="F:phosphoribosylformylglycinamidine synthase activity"/>
    <property type="evidence" value="ECO:0007669"/>
    <property type="project" value="UniProtKB-UniRule"/>
</dbReference>
<dbReference type="GO" id="GO:0006189">
    <property type="term" value="P:'de novo' IMP biosynthetic process"/>
    <property type="evidence" value="ECO:0007669"/>
    <property type="project" value="UniProtKB-UniRule"/>
</dbReference>
<dbReference type="CDD" id="cd02203">
    <property type="entry name" value="PurL_repeat1"/>
    <property type="match status" value="1"/>
</dbReference>
<dbReference type="CDD" id="cd02204">
    <property type="entry name" value="PurL_repeat2"/>
    <property type="match status" value="1"/>
</dbReference>
<dbReference type="FunFam" id="3.30.1330.10:FF:000004">
    <property type="entry name" value="Phosphoribosylformylglycinamidine synthase subunit PurL"/>
    <property type="match status" value="1"/>
</dbReference>
<dbReference type="FunFam" id="3.90.650.10:FF:000009">
    <property type="entry name" value="Phosphoribosylformylglycinamidine synthase subunit PurL"/>
    <property type="match status" value="1"/>
</dbReference>
<dbReference type="FunFam" id="3.90.650.10:FF:000013">
    <property type="entry name" value="Phosphoribosylformylglycinamidine synthase subunit PurL"/>
    <property type="match status" value="1"/>
</dbReference>
<dbReference type="Gene3D" id="3.90.650.10">
    <property type="entry name" value="PurM-like C-terminal domain"/>
    <property type="match status" value="2"/>
</dbReference>
<dbReference type="Gene3D" id="3.30.1330.10">
    <property type="entry name" value="PurM-like, N-terminal domain"/>
    <property type="match status" value="2"/>
</dbReference>
<dbReference type="HAMAP" id="MF_00420">
    <property type="entry name" value="PurL_2"/>
    <property type="match status" value="1"/>
</dbReference>
<dbReference type="InterPro" id="IPR010074">
    <property type="entry name" value="PRibForGlyAmidine_synth_PurL"/>
</dbReference>
<dbReference type="InterPro" id="IPR041609">
    <property type="entry name" value="PurL_linker"/>
</dbReference>
<dbReference type="InterPro" id="IPR010918">
    <property type="entry name" value="PurM-like_C_dom"/>
</dbReference>
<dbReference type="InterPro" id="IPR036676">
    <property type="entry name" value="PurM-like_C_sf"/>
</dbReference>
<dbReference type="InterPro" id="IPR016188">
    <property type="entry name" value="PurM-like_N"/>
</dbReference>
<dbReference type="InterPro" id="IPR036921">
    <property type="entry name" value="PurM-like_N_sf"/>
</dbReference>
<dbReference type="NCBIfam" id="TIGR01736">
    <property type="entry name" value="FGAM_synth_II"/>
    <property type="match status" value="1"/>
</dbReference>
<dbReference type="NCBIfam" id="NF002290">
    <property type="entry name" value="PRK01213.1"/>
    <property type="match status" value="1"/>
</dbReference>
<dbReference type="PANTHER" id="PTHR43555">
    <property type="entry name" value="PHOSPHORIBOSYLFORMYLGLYCINAMIDINE SYNTHASE SUBUNIT PURL"/>
    <property type="match status" value="1"/>
</dbReference>
<dbReference type="PANTHER" id="PTHR43555:SF1">
    <property type="entry name" value="PHOSPHORIBOSYLFORMYLGLYCINAMIDINE SYNTHASE SUBUNIT PURL"/>
    <property type="match status" value="1"/>
</dbReference>
<dbReference type="Pfam" id="PF00586">
    <property type="entry name" value="AIRS"/>
    <property type="match status" value="2"/>
</dbReference>
<dbReference type="Pfam" id="PF02769">
    <property type="entry name" value="AIRS_C"/>
    <property type="match status" value="2"/>
</dbReference>
<dbReference type="Pfam" id="PF18072">
    <property type="entry name" value="FGAR-AT_linker"/>
    <property type="match status" value="1"/>
</dbReference>
<dbReference type="PIRSF" id="PIRSF001587">
    <property type="entry name" value="FGAM_synthase_II"/>
    <property type="match status" value="1"/>
</dbReference>
<dbReference type="SUPFAM" id="SSF56042">
    <property type="entry name" value="PurM C-terminal domain-like"/>
    <property type="match status" value="2"/>
</dbReference>
<dbReference type="SUPFAM" id="SSF55326">
    <property type="entry name" value="PurM N-terminal domain-like"/>
    <property type="match status" value="2"/>
</dbReference>
<keyword id="KW-0067">ATP-binding</keyword>
<keyword id="KW-0963">Cytoplasm</keyword>
<keyword id="KW-0436">Ligase</keyword>
<keyword id="KW-0460">Magnesium</keyword>
<keyword id="KW-0479">Metal-binding</keyword>
<keyword id="KW-0547">Nucleotide-binding</keyword>
<keyword id="KW-0658">Purine biosynthesis</keyword>
<feature type="chain" id="PRO_0000100467" description="Phosphoribosylformylglycinamidine synthase subunit PurL">
    <location>
        <begin position="1"/>
        <end position="739"/>
    </location>
</feature>
<feature type="active site" evidence="1">
    <location>
        <position position="53"/>
    </location>
</feature>
<feature type="active site" description="Proton acceptor" evidence="1">
    <location>
        <position position="99"/>
    </location>
</feature>
<feature type="binding site" evidence="1">
    <location>
        <position position="56"/>
    </location>
    <ligand>
        <name>ATP</name>
        <dbReference type="ChEBI" id="CHEBI:30616"/>
    </ligand>
</feature>
<feature type="binding site" evidence="1">
    <location>
        <position position="95"/>
    </location>
    <ligand>
        <name>ATP</name>
        <dbReference type="ChEBI" id="CHEBI:30616"/>
    </ligand>
</feature>
<feature type="binding site" evidence="1">
    <location>
        <position position="97"/>
    </location>
    <ligand>
        <name>Mg(2+)</name>
        <dbReference type="ChEBI" id="CHEBI:18420"/>
        <label>1</label>
    </ligand>
</feature>
<feature type="binding site" evidence="1">
    <location>
        <begin position="98"/>
        <end position="101"/>
    </location>
    <ligand>
        <name>substrate</name>
    </ligand>
</feature>
<feature type="binding site" evidence="1">
    <location>
        <position position="120"/>
    </location>
    <ligand>
        <name>substrate</name>
    </ligand>
</feature>
<feature type="binding site" evidence="1">
    <location>
        <position position="121"/>
    </location>
    <ligand>
        <name>Mg(2+)</name>
        <dbReference type="ChEBI" id="CHEBI:18420"/>
        <label>2</label>
    </ligand>
</feature>
<feature type="binding site" evidence="1">
    <location>
        <position position="244"/>
    </location>
    <ligand>
        <name>substrate</name>
    </ligand>
</feature>
<feature type="binding site" evidence="1">
    <location>
        <position position="274"/>
    </location>
    <ligand>
        <name>Mg(2+)</name>
        <dbReference type="ChEBI" id="CHEBI:18420"/>
        <label>2</label>
    </ligand>
</feature>
<feature type="binding site" evidence="1">
    <location>
        <begin position="318"/>
        <end position="320"/>
    </location>
    <ligand>
        <name>substrate</name>
    </ligand>
</feature>
<feature type="binding site" evidence="1">
    <location>
        <position position="501"/>
    </location>
    <ligand>
        <name>ATP</name>
        <dbReference type="ChEBI" id="CHEBI:30616"/>
    </ligand>
</feature>
<feature type="binding site" evidence="1">
    <location>
        <position position="538"/>
    </location>
    <ligand>
        <name>ATP</name>
        <dbReference type="ChEBI" id="CHEBI:30616"/>
    </ligand>
</feature>
<feature type="binding site" evidence="1">
    <location>
        <position position="539"/>
    </location>
    <ligand>
        <name>Mg(2+)</name>
        <dbReference type="ChEBI" id="CHEBI:18420"/>
        <label>1</label>
    </ligand>
</feature>
<feature type="binding site" evidence="1">
    <location>
        <position position="541"/>
    </location>
    <ligand>
        <name>substrate</name>
    </ligand>
</feature>
<reference key="1">
    <citation type="journal article" date="2001" name="Science">
        <title>Comparative genomics of Listeria species.</title>
        <authorList>
            <person name="Glaser P."/>
            <person name="Frangeul L."/>
            <person name="Buchrieser C."/>
            <person name="Rusniok C."/>
            <person name="Amend A."/>
            <person name="Baquero F."/>
            <person name="Berche P."/>
            <person name="Bloecker H."/>
            <person name="Brandt P."/>
            <person name="Chakraborty T."/>
            <person name="Charbit A."/>
            <person name="Chetouani F."/>
            <person name="Couve E."/>
            <person name="de Daruvar A."/>
            <person name="Dehoux P."/>
            <person name="Domann E."/>
            <person name="Dominguez-Bernal G."/>
            <person name="Duchaud E."/>
            <person name="Durant L."/>
            <person name="Dussurget O."/>
            <person name="Entian K.-D."/>
            <person name="Fsihi H."/>
            <person name="Garcia-del Portillo F."/>
            <person name="Garrido P."/>
            <person name="Gautier L."/>
            <person name="Goebel W."/>
            <person name="Gomez-Lopez N."/>
            <person name="Hain T."/>
            <person name="Hauf J."/>
            <person name="Jackson D."/>
            <person name="Jones L.-M."/>
            <person name="Kaerst U."/>
            <person name="Kreft J."/>
            <person name="Kuhn M."/>
            <person name="Kunst F."/>
            <person name="Kurapkat G."/>
            <person name="Madueno E."/>
            <person name="Maitournam A."/>
            <person name="Mata Vicente J."/>
            <person name="Ng E."/>
            <person name="Nedjari H."/>
            <person name="Nordsiek G."/>
            <person name="Novella S."/>
            <person name="de Pablos B."/>
            <person name="Perez-Diaz J.-C."/>
            <person name="Purcell R."/>
            <person name="Remmel B."/>
            <person name="Rose M."/>
            <person name="Schlueter T."/>
            <person name="Simoes N."/>
            <person name="Tierrez A."/>
            <person name="Vazquez-Boland J.-A."/>
            <person name="Voss H."/>
            <person name="Wehland J."/>
            <person name="Cossart P."/>
        </authorList>
    </citation>
    <scope>NUCLEOTIDE SEQUENCE [LARGE SCALE GENOMIC DNA]</scope>
    <source>
        <strain>ATCC BAA-680 / CLIP 11262</strain>
    </source>
</reference>
<protein>
    <recommendedName>
        <fullName evidence="1">Phosphoribosylformylglycinamidine synthase subunit PurL</fullName>
        <shortName evidence="1">FGAM synthase</shortName>
        <ecNumber evidence="1">6.3.5.3</ecNumber>
    </recommendedName>
    <alternativeName>
        <fullName evidence="1">Formylglycinamide ribonucleotide amidotransferase subunit II</fullName>
        <shortName evidence="1">FGAR amidotransferase II</shortName>
        <shortName evidence="1">FGAR-AT II</shortName>
    </alternativeName>
    <alternativeName>
        <fullName evidence="1">Glutamine amidotransferase PurL</fullName>
    </alternativeName>
    <alternativeName>
        <fullName evidence="1">Phosphoribosylformylglycinamidine synthase subunit II</fullName>
    </alternativeName>
</protein>
<comment type="function">
    <text evidence="1">Part of the phosphoribosylformylglycinamidine synthase complex involved in the purines biosynthetic pathway. Catalyzes the ATP-dependent conversion of formylglycinamide ribonucleotide (FGAR) and glutamine to yield formylglycinamidine ribonucleotide (FGAM) and glutamate. The FGAM synthase complex is composed of three subunits. PurQ produces an ammonia molecule by converting glutamine to glutamate. PurL transfers the ammonia molecule to FGAR to form FGAM in an ATP-dependent manner. PurS interacts with PurQ and PurL and is thought to assist in the transfer of the ammonia molecule from PurQ to PurL.</text>
</comment>
<comment type="catalytic activity">
    <reaction evidence="1">
        <text>N(2)-formyl-N(1)-(5-phospho-beta-D-ribosyl)glycinamide + L-glutamine + ATP + H2O = 2-formamido-N(1)-(5-O-phospho-beta-D-ribosyl)acetamidine + L-glutamate + ADP + phosphate + H(+)</text>
        <dbReference type="Rhea" id="RHEA:17129"/>
        <dbReference type="ChEBI" id="CHEBI:15377"/>
        <dbReference type="ChEBI" id="CHEBI:15378"/>
        <dbReference type="ChEBI" id="CHEBI:29985"/>
        <dbReference type="ChEBI" id="CHEBI:30616"/>
        <dbReference type="ChEBI" id="CHEBI:43474"/>
        <dbReference type="ChEBI" id="CHEBI:58359"/>
        <dbReference type="ChEBI" id="CHEBI:147286"/>
        <dbReference type="ChEBI" id="CHEBI:147287"/>
        <dbReference type="ChEBI" id="CHEBI:456216"/>
        <dbReference type="EC" id="6.3.5.3"/>
    </reaction>
</comment>
<comment type="pathway">
    <text evidence="1">Purine metabolism; IMP biosynthesis via de novo pathway; 5-amino-1-(5-phospho-D-ribosyl)imidazole from N(2)-formyl-N(1)-(5-phospho-D-ribosyl)glycinamide: step 1/2.</text>
</comment>
<comment type="subunit">
    <text evidence="1">Monomer. Part of the FGAM synthase complex composed of 1 PurL, 1 PurQ and 2 PurS subunits.</text>
</comment>
<comment type="subcellular location">
    <subcellularLocation>
        <location evidence="1">Cytoplasm</location>
    </subcellularLocation>
</comment>
<comment type="similarity">
    <text evidence="1">Belongs to the FGAMS family.</text>
</comment>
<organism>
    <name type="scientific">Listeria innocua serovar 6a (strain ATCC BAA-680 / CLIP 11262)</name>
    <dbReference type="NCBI Taxonomy" id="272626"/>
    <lineage>
        <taxon>Bacteria</taxon>
        <taxon>Bacillati</taxon>
        <taxon>Bacillota</taxon>
        <taxon>Bacilli</taxon>
        <taxon>Bacillales</taxon>
        <taxon>Listeriaceae</taxon>
        <taxon>Listeria</taxon>
    </lineage>
</organism>
<gene>
    <name evidence="1" type="primary">purL</name>
    <name type="ordered locus">lin1881</name>
</gene>
<evidence type="ECO:0000255" key="1">
    <source>
        <dbReference type="HAMAP-Rule" id="MF_00420"/>
    </source>
</evidence>
<sequence>MPNMEPTTKEIKEQKIYQEMGLTDSEYELVCSILGREPNYTETGLFSVMWSEHCSYKNSKPVLRKFPTEGKQVLQGPGEGAGIVDIGDGLGVAFKVESHNHPSYVEPYQGAATGVGGIIRDVFSMGARPIAMLNSLRFGELDTPHAKYLVSEVVAGIAGYGNSIGIPTVGGEIQFDPCYTKNPLVNAMCVGLIEAKDIQKGQAKGIGNPVMYVGAKTGRDGIHGATFASVEFSEEGEQQRSAVQVGDPFMEKLLLEACLDVIRDHSDILVGIQDMGAAGLVSSSSEMASKAGAGLELIMDDVPQRELHMTPYEMLLSESQERMLLCVKKGHVEEIQALFERYGLEAVVIGKVTDDKMYKIIHHGEVVANVPVDALAEDAPVYHKPSKEPARYQAFQEEDAFVPVIDDVVGVWKELLAQPTIASKRHIYEQYDYQVRTDTAVVPGSDAAIVRVRGTEKAIAMTTDCNSRYLYLDPEVGGAIAVAEAARNIVCSGGKPLAITDGLNFGNPEKPEIFWEIEKAADGISAACLELDTPVISGNVSLYNETDGTGIYPTPVIGMVGLVEDLAHITTQDFKNSGDVIFLIGETKAEYSGSELQKLQQGKISGRAPELDLATEKKYQQLLLTAIQEGLVASSHDLAEGGFGVALAEATFKAGLGADVEVPFELNQLFSESQSRFLVSVKPENEAAFAKLMELEKVYRLGVVTADETIRVKHKEELVTASTSDLRSIWEGAIPCLLK</sequence>
<proteinExistence type="inferred from homology"/>